<comment type="function">
    <text evidence="4">Cleaves beta-linked terminal galactosyl residues from gangliosides, glycoproteins, and glycosaminoglycans.</text>
</comment>
<comment type="catalytic activity">
    <reaction evidence="4">
        <text>Hydrolysis of terminal non-reducing beta-D-galactose residues in beta-D-galactosides.</text>
        <dbReference type="EC" id="3.2.1.23"/>
    </reaction>
</comment>
<comment type="biophysicochemical properties">
    <phDependence>
        <text evidence="4">Optimum pH is 4.5.</text>
    </phDependence>
</comment>
<comment type="subcellular location">
    <subcellularLocation>
        <location evidence="4">Secreted</location>
    </subcellularLocation>
</comment>
<comment type="similarity">
    <text evidence="6">Belongs to the glycosyl hydrolase 35 family.</text>
</comment>
<reference key="1">
    <citation type="journal article" date="2005" name="Nature">
        <title>Genome sequencing and analysis of Aspergillus oryzae.</title>
        <authorList>
            <person name="Machida M."/>
            <person name="Asai K."/>
            <person name="Sano M."/>
            <person name="Tanaka T."/>
            <person name="Kumagai T."/>
            <person name="Terai G."/>
            <person name="Kusumoto K."/>
            <person name="Arima T."/>
            <person name="Akita O."/>
            <person name="Kashiwagi Y."/>
            <person name="Abe K."/>
            <person name="Gomi K."/>
            <person name="Horiuchi H."/>
            <person name="Kitamoto K."/>
            <person name="Kobayashi T."/>
            <person name="Takeuchi M."/>
            <person name="Denning D.W."/>
            <person name="Galagan J.E."/>
            <person name="Nierman W.C."/>
            <person name="Yu J."/>
            <person name="Archer D.B."/>
            <person name="Bennett J.W."/>
            <person name="Bhatnagar D."/>
            <person name="Cleveland T.E."/>
            <person name="Fedorova N.D."/>
            <person name="Gotoh O."/>
            <person name="Horikawa H."/>
            <person name="Hosoyama A."/>
            <person name="Ichinomiya M."/>
            <person name="Igarashi R."/>
            <person name="Iwashita K."/>
            <person name="Juvvadi P.R."/>
            <person name="Kato M."/>
            <person name="Kato Y."/>
            <person name="Kin T."/>
            <person name="Kokubun A."/>
            <person name="Maeda H."/>
            <person name="Maeyama N."/>
            <person name="Maruyama J."/>
            <person name="Nagasaki H."/>
            <person name="Nakajima T."/>
            <person name="Oda K."/>
            <person name="Okada K."/>
            <person name="Paulsen I."/>
            <person name="Sakamoto K."/>
            <person name="Sawano T."/>
            <person name="Takahashi M."/>
            <person name="Takase K."/>
            <person name="Terabayashi Y."/>
            <person name="Wortman J.R."/>
            <person name="Yamada O."/>
            <person name="Yamagata Y."/>
            <person name="Anazawa H."/>
            <person name="Hata Y."/>
            <person name="Koide Y."/>
            <person name="Komori T."/>
            <person name="Koyama Y."/>
            <person name="Minetoki T."/>
            <person name="Suharnan S."/>
            <person name="Tanaka A."/>
            <person name="Isono K."/>
            <person name="Kuhara S."/>
            <person name="Ogasawara N."/>
            <person name="Kikuchi H."/>
        </authorList>
    </citation>
    <scope>NUCLEOTIDE SEQUENCE [LARGE SCALE GENOMIC DNA]</scope>
    <source>
        <strain>ATCC 42149 / RIB 40</strain>
    </source>
</reference>
<reference key="2">
    <citation type="journal article" date="2013" name="Int. J. Biol. Macromol.">
        <title>The crystal structure of acidic beta-galactosidase from Aspergillus oryzae.</title>
        <authorList>
            <person name="Maksimainen M.M."/>
            <person name="Lampio A."/>
            <person name="Mertanen M."/>
            <person name="Turunen O."/>
            <person name="Rouvinen J."/>
        </authorList>
    </citation>
    <scope>X-RAY CRYSTALLOGRAPHY (2.60 ANGSTROMS) IN COMPLEX WITH GALACTOSE</scope>
    <scope>FUNCTION</scope>
    <scope>CATALYTIC ACTIVITY</scope>
    <scope>BIOPHYSICOCHEMICAL PROPERTIES</scope>
    <scope>SUBCELLULAR LOCATION</scope>
    <scope>GLYCOSYLATION AT ASN-373; ASN-402; ASN-622; ASN-760; ASN-777 AND ASN-914</scope>
    <scope>DISULFIDE BOND</scope>
</reference>
<name>BGALA_ASPOR</name>
<feature type="signal peptide" evidence="2">
    <location>
        <begin position="1"/>
        <end position="18"/>
    </location>
</feature>
<feature type="chain" id="PRO_0000395218" description="Beta-galactosidase A">
    <location>
        <begin position="19"/>
        <end position="1005"/>
    </location>
</feature>
<feature type="active site" description="Proton donor" evidence="7">
    <location>
        <position position="200"/>
    </location>
</feature>
<feature type="active site" description="Nucleophile" evidence="7">
    <location>
        <position position="298"/>
    </location>
</feature>
<feature type="binding site" evidence="4 8">
    <location>
        <position position="96"/>
    </location>
    <ligand>
        <name>substrate</name>
    </ligand>
</feature>
<feature type="binding site" evidence="4 8">
    <location>
        <begin position="140"/>
        <end position="142"/>
    </location>
    <ligand>
        <name>substrate</name>
    </ligand>
</feature>
<feature type="binding site" evidence="4 8">
    <location>
        <position position="199"/>
    </location>
    <ligand>
        <name>substrate</name>
    </ligand>
</feature>
<feature type="binding site" evidence="4 8">
    <location>
        <position position="258"/>
    </location>
    <ligand>
        <name>substrate</name>
    </ligand>
</feature>
<feature type="binding site" evidence="4 8">
    <location>
        <position position="364"/>
    </location>
    <ligand>
        <name>substrate</name>
    </ligand>
</feature>
<feature type="glycosylation site" description="N-linked (GlcNAc...) asparagine" evidence="3">
    <location>
        <position position="156"/>
    </location>
</feature>
<feature type="glycosylation site" description="N-linked (GlcNAc...) asparagine" evidence="3 4 8">
    <location>
        <position position="373"/>
    </location>
</feature>
<feature type="glycosylation site" description="N-linked (GlcNAc...) asparagine" evidence="3 4 8">
    <location>
        <position position="402"/>
    </location>
</feature>
<feature type="glycosylation site" description="N-linked (GlcNAc...) asparagine" evidence="3">
    <location>
        <position position="453"/>
    </location>
</feature>
<feature type="glycosylation site" description="N-linked (GlcNAc...) asparagine" evidence="3">
    <location>
        <position position="478"/>
    </location>
</feature>
<feature type="glycosylation site" description="N-linked (GlcNAc...) asparagine" evidence="3">
    <location>
        <position position="522"/>
    </location>
</feature>
<feature type="glycosylation site" description="N-linked (GlcNAc...) asparagine" evidence="3 4 8">
    <location>
        <position position="622"/>
    </location>
</feature>
<feature type="glycosylation site" description="N-linked (GlcNAc...) asparagine" evidence="3 4 8">
    <location>
        <position position="760"/>
    </location>
</feature>
<feature type="glycosylation site" description="N-linked (GlcNAc...) asparagine" evidence="3 4 8">
    <location>
        <position position="777"/>
    </location>
</feature>
<feature type="glycosylation site" description="N-linked (GlcNAc...) asparagine" evidence="3">
    <location>
        <position position="805"/>
    </location>
</feature>
<feature type="glycosylation site" description="N-linked (GlcNAc...) asparagine" evidence="3 4 8">
    <location>
        <position position="914"/>
    </location>
</feature>
<feature type="disulfide bond" evidence="1">
    <location>
        <begin position="205"/>
        <end position="206"/>
    </location>
</feature>
<feature type="disulfide bond" evidence="4 8">
    <location>
        <begin position="266"/>
        <end position="315"/>
    </location>
</feature>
<feature type="strand" evidence="9">
    <location>
        <begin position="44"/>
        <end position="48"/>
    </location>
</feature>
<feature type="strand" evidence="9">
    <location>
        <begin position="53"/>
        <end position="55"/>
    </location>
</feature>
<feature type="strand" evidence="9">
    <location>
        <begin position="58"/>
        <end position="60"/>
    </location>
</feature>
<feature type="strand" evidence="9">
    <location>
        <begin position="62"/>
        <end position="67"/>
    </location>
</feature>
<feature type="helix" evidence="9">
    <location>
        <begin position="69"/>
        <end position="71"/>
    </location>
</feature>
<feature type="helix" evidence="9">
    <location>
        <begin position="75"/>
        <end position="77"/>
    </location>
</feature>
<feature type="helix" evidence="9">
    <location>
        <begin position="78"/>
        <end position="87"/>
    </location>
</feature>
<feature type="strand" evidence="9">
    <location>
        <begin position="92"/>
        <end position="96"/>
    </location>
</feature>
<feature type="helix" evidence="9">
    <location>
        <begin position="99"/>
        <end position="102"/>
    </location>
</feature>
<feature type="helix" evidence="9">
    <location>
        <begin position="113"/>
        <end position="115"/>
    </location>
</feature>
<feature type="helix" evidence="9">
    <location>
        <begin position="118"/>
        <end position="127"/>
    </location>
</feature>
<feature type="strand" evidence="9">
    <location>
        <begin position="130"/>
        <end position="137"/>
    </location>
</feature>
<feature type="helix" evidence="9">
    <location>
        <begin position="144"/>
        <end position="147"/>
    </location>
</feature>
<feature type="helix" evidence="9">
    <location>
        <begin position="150"/>
        <end position="154"/>
    </location>
</feature>
<feature type="helix" evidence="9">
    <location>
        <begin position="164"/>
        <end position="169"/>
    </location>
</feature>
<feature type="helix" evidence="9">
    <location>
        <begin position="171"/>
        <end position="183"/>
    </location>
</feature>
<feature type="helix" evidence="9">
    <location>
        <begin position="186"/>
        <end position="188"/>
    </location>
</feature>
<feature type="strand" evidence="9">
    <location>
        <begin position="190"/>
        <end position="200"/>
    </location>
</feature>
<feature type="helix" evidence="9">
    <location>
        <begin position="213"/>
        <end position="224"/>
    </location>
</feature>
<feature type="turn" evidence="9">
    <location>
        <begin position="225"/>
        <end position="227"/>
    </location>
</feature>
<feature type="strand" evidence="9">
    <location>
        <begin position="236"/>
        <end position="240"/>
    </location>
</feature>
<feature type="strand" evidence="9">
    <location>
        <begin position="257"/>
        <end position="259"/>
    </location>
</feature>
<feature type="helix" evidence="9">
    <location>
        <begin position="281"/>
        <end position="288"/>
    </location>
</feature>
<feature type="strand" evidence="9">
    <location>
        <begin position="295"/>
        <end position="302"/>
    </location>
</feature>
<feature type="helix" evidence="9">
    <location>
        <begin position="312"/>
        <end position="318"/>
    </location>
</feature>
<feature type="helix" evidence="9">
    <location>
        <begin position="321"/>
        <end position="332"/>
    </location>
</feature>
<feature type="turn" evidence="9">
    <location>
        <begin position="333"/>
        <end position="335"/>
    </location>
</feature>
<feature type="strand" evidence="9">
    <location>
        <begin position="337"/>
        <end position="345"/>
    </location>
</feature>
<feature type="helix" evidence="9">
    <location>
        <begin position="350"/>
        <end position="352"/>
    </location>
</feature>
<feature type="helix" evidence="9">
    <location>
        <begin position="377"/>
        <end position="390"/>
    </location>
</feature>
<feature type="helix" evidence="9">
    <location>
        <begin position="393"/>
        <end position="395"/>
    </location>
</feature>
<feature type="strand" evidence="9">
    <location>
        <begin position="404"/>
        <end position="410"/>
    </location>
</feature>
<feature type="strand" evidence="9">
    <location>
        <begin position="412"/>
        <end position="420"/>
    </location>
</feature>
<feature type="strand" evidence="9">
    <location>
        <begin position="422"/>
        <end position="424"/>
    </location>
</feature>
<feature type="strand" evidence="9">
    <location>
        <begin position="426"/>
        <end position="434"/>
    </location>
</feature>
<feature type="strand" evidence="9">
    <location>
        <begin position="440"/>
        <end position="443"/>
    </location>
</feature>
<feature type="strand" evidence="9">
    <location>
        <begin position="445"/>
        <end position="449"/>
    </location>
</feature>
<feature type="strand" evidence="9">
    <location>
        <begin position="452"/>
        <end position="460"/>
    </location>
</feature>
<feature type="strand" evidence="9">
    <location>
        <begin position="463"/>
        <end position="468"/>
    </location>
</feature>
<feature type="strand" evidence="9">
    <location>
        <begin position="471"/>
        <end position="479"/>
    </location>
</feature>
<feature type="strand" evidence="9">
    <location>
        <begin position="482"/>
        <end position="497"/>
    </location>
</feature>
<feature type="strand" evidence="9">
    <location>
        <begin position="500"/>
        <end position="507"/>
    </location>
</feature>
<feature type="strand" evidence="9">
    <location>
        <begin position="512"/>
        <end position="518"/>
    </location>
</feature>
<feature type="strand" evidence="9">
    <location>
        <begin position="524"/>
        <end position="528"/>
    </location>
</feature>
<feature type="strand" evidence="9">
    <location>
        <begin position="534"/>
        <end position="538"/>
    </location>
</feature>
<feature type="strand" evidence="9">
    <location>
        <begin position="541"/>
        <end position="547"/>
    </location>
</feature>
<feature type="strand" evidence="9">
    <location>
        <begin position="553"/>
        <end position="557"/>
    </location>
</feature>
<feature type="strand" evidence="9">
    <location>
        <begin position="560"/>
        <end position="566"/>
    </location>
</feature>
<feature type="helix" evidence="9">
    <location>
        <begin position="567"/>
        <end position="570"/>
    </location>
</feature>
<feature type="strand" evidence="9">
    <location>
        <begin position="580"/>
        <end position="583"/>
    </location>
</feature>
<feature type="helix" evidence="9">
    <location>
        <begin position="590"/>
        <end position="594"/>
    </location>
</feature>
<feature type="strand" evidence="9">
    <location>
        <begin position="598"/>
        <end position="600"/>
    </location>
</feature>
<feature type="strand" evidence="9">
    <location>
        <begin position="602"/>
        <end position="611"/>
    </location>
</feature>
<feature type="strand" evidence="9">
    <location>
        <begin position="614"/>
        <end position="623"/>
    </location>
</feature>
<feature type="strand" evidence="9">
    <location>
        <begin position="625"/>
        <end position="631"/>
    </location>
</feature>
<feature type="strand" evidence="9">
    <location>
        <begin position="638"/>
        <end position="641"/>
    </location>
</feature>
<feature type="strand" evidence="9">
    <location>
        <begin position="644"/>
        <end position="646"/>
    </location>
</feature>
<feature type="strand" evidence="9">
    <location>
        <begin position="656"/>
        <end position="660"/>
    </location>
</feature>
<feature type="helix" evidence="9">
    <location>
        <begin position="672"/>
        <end position="674"/>
    </location>
</feature>
<feature type="strand" evidence="9">
    <location>
        <begin position="678"/>
        <end position="682"/>
    </location>
</feature>
<feature type="helix" evidence="9">
    <location>
        <begin position="684"/>
        <end position="686"/>
    </location>
</feature>
<feature type="strand" evidence="9">
    <location>
        <begin position="695"/>
        <end position="697"/>
    </location>
</feature>
<feature type="strand" evidence="9">
    <location>
        <begin position="706"/>
        <end position="708"/>
    </location>
</feature>
<feature type="strand" evidence="9">
    <location>
        <begin position="711"/>
        <end position="714"/>
    </location>
</feature>
<feature type="helix" evidence="9">
    <location>
        <begin position="718"/>
        <end position="721"/>
    </location>
</feature>
<feature type="strand" evidence="9">
    <location>
        <begin position="728"/>
        <end position="735"/>
    </location>
</feature>
<feature type="strand" evidence="9">
    <location>
        <begin position="742"/>
        <end position="748"/>
    </location>
</feature>
<feature type="strand" evidence="9">
    <location>
        <begin position="755"/>
        <end position="759"/>
    </location>
</feature>
<feature type="strand" evidence="9">
    <location>
        <begin position="762"/>
        <end position="767"/>
    </location>
</feature>
<feature type="strand" evidence="9">
    <location>
        <begin position="774"/>
        <end position="781"/>
    </location>
</feature>
<feature type="strand" evidence="9">
    <location>
        <begin position="790"/>
        <end position="797"/>
    </location>
</feature>
<feature type="turn" evidence="9">
    <location>
        <begin position="808"/>
        <end position="810"/>
    </location>
</feature>
<feature type="helix" evidence="9">
    <location>
        <begin position="812"/>
        <end position="814"/>
    </location>
</feature>
<feature type="strand" evidence="9">
    <location>
        <begin position="818"/>
        <end position="824"/>
    </location>
</feature>
<feature type="helix" evidence="9">
    <location>
        <begin position="829"/>
        <end position="831"/>
    </location>
</feature>
<feature type="strand" evidence="9">
    <location>
        <begin position="833"/>
        <end position="839"/>
    </location>
</feature>
<feature type="turn" evidence="9">
    <location>
        <begin position="840"/>
        <end position="843"/>
    </location>
</feature>
<feature type="turn" evidence="9">
    <location>
        <begin position="848"/>
        <end position="850"/>
    </location>
</feature>
<feature type="strand" evidence="9">
    <location>
        <begin position="852"/>
        <end position="854"/>
    </location>
</feature>
<feature type="helix" evidence="9">
    <location>
        <begin position="859"/>
        <end position="863"/>
    </location>
</feature>
<feature type="turn" evidence="9">
    <location>
        <begin position="864"/>
        <end position="866"/>
    </location>
</feature>
<feature type="strand" evidence="9">
    <location>
        <begin position="867"/>
        <end position="869"/>
    </location>
</feature>
<feature type="strand" evidence="9">
    <location>
        <begin position="875"/>
        <end position="877"/>
    </location>
</feature>
<feature type="turn" evidence="9">
    <location>
        <begin position="880"/>
        <end position="882"/>
    </location>
</feature>
<feature type="strand" evidence="9">
    <location>
        <begin position="884"/>
        <end position="899"/>
    </location>
</feature>
<feature type="strand" evidence="9">
    <location>
        <begin position="908"/>
        <end position="912"/>
    </location>
</feature>
<feature type="strand" evidence="9">
    <location>
        <begin position="918"/>
        <end position="925"/>
    </location>
</feature>
<feature type="strand" evidence="9">
    <location>
        <begin position="928"/>
        <end position="934"/>
    </location>
</feature>
<feature type="turn" evidence="9">
    <location>
        <begin position="935"/>
        <end position="937"/>
    </location>
</feature>
<feature type="strand" evidence="9">
    <location>
        <begin position="942"/>
        <end position="945"/>
    </location>
</feature>
<feature type="strand" evidence="9">
    <location>
        <begin position="953"/>
        <end position="964"/>
    </location>
</feature>
<feature type="strand" evidence="9">
    <location>
        <begin position="975"/>
        <end position="979"/>
    </location>
</feature>
<keyword id="KW-0002">3D-structure</keyword>
<keyword id="KW-0119">Carbohydrate metabolism</keyword>
<keyword id="KW-1015">Disulfide bond</keyword>
<keyword id="KW-0325">Glycoprotein</keyword>
<keyword id="KW-0326">Glycosidase</keyword>
<keyword id="KW-0378">Hydrolase</keyword>
<keyword id="KW-0624">Polysaccharide degradation</keyword>
<keyword id="KW-1185">Reference proteome</keyword>
<keyword id="KW-0964">Secreted</keyword>
<keyword id="KW-0732">Signal</keyword>
<organism>
    <name type="scientific">Aspergillus oryzae (strain ATCC 42149 / RIB 40)</name>
    <name type="common">Yellow koji mold</name>
    <dbReference type="NCBI Taxonomy" id="510516"/>
    <lineage>
        <taxon>Eukaryota</taxon>
        <taxon>Fungi</taxon>
        <taxon>Dikarya</taxon>
        <taxon>Ascomycota</taxon>
        <taxon>Pezizomycotina</taxon>
        <taxon>Eurotiomycetes</taxon>
        <taxon>Eurotiomycetidae</taxon>
        <taxon>Eurotiales</taxon>
        <taxon>Aspergillaceae</taxon>
        <taxon>Aspergillus</taxon>
        <taxon>Aspergillus subgen. Circumdati</taxon>
    </lineage>
</organism>
<accession>Q2UCU3</accession>
<sequence length="1005" mass="109870">MKLLSVAAVALLAAQAAGASIKHRLNGFTILEHPDPAKRDLLQDIVTWDDKSLFINGERIMLFSGEVHPFRLPVPSLWLDIFHKIRALGFNCVSFYIDWALLEGKPGDYRAEGIFALEPFFDAAKEAGIYLIARPGSYINAEVSGGGFPGWLQRVNGTLRSSDEPFLKATDNYIANAAAAVAKAQITNGGPVILYQPENEYSGGCCGVKYPDADYMQYVMDQARKADIVVPFISNDASPSGHNAPGSGTGAVDIYGHDSYPLGFDCANPSVWPEGKLPDNFRTLHLEQSPSTPYSLLEFQAGAFDPWGGPGFEKCYALVNHEFSRVFYRNDLSFGVSTFNLYMTFGGTNWGNLGHPGGYTSYDYGSPITETRNVTREKYSDIKLLANFVKASPSYLTATPRNLTTGVYTDTSDLAVTPLIGDSPGSFFVVRHTDYSSQESTSYKLKLPTSAGNLTIPQLEGTLSLNGRDSKIHVVDYNVSGTNIIYSTAEVFTWKKFDGNKVLVLYGGPKEHHELAIASKSNVTIIEGSDSGIVSTRKGSSVIIGWDVSSTRRIVQVGDLRVFLLDRNSAYNYWVPELPTEGTSPGFSTSKTTASSIIVKAGYLLRGAHLDGADLHLTADFNATTPIEVIGAPTGAKNLFVNGEKASHTVDKNGIWSSEVKYAAPEIKLPGLKDLDWKYLDTLPEIKSSYDDSAWVSADLPKTKNTHRPLDTPTSLYSSDYGFHTGYLIYRGHFVANGKESEFFIRTQGGSAFGSSVWLNETYLGSWTGADYAMDGNSTYKLSQLESGKNYVITVVIDNLGLDENWTVGEETMKNPRGILSYKLSGQDASAITWKLTGNLGGEDYQDKVRGPLNEGGLYAERQGFHQPQPPSESWESGSPLEGLSKPGIGFYTAQFDLDLPKGWDVPLYFNFGNNTQAARAQLYVNGYQYGKFTGNVGPQTSFPVPEGILNYRGTNYVALSLWALESDGAKLGSFELSYTTPVLTGYGNVESPEQPKYEQRKGAY</sequence>
<gene>
    <name type="primary">lacA</name>
    <name type="ORF">AO090012000445</name>
</gene>
<proteinExistence type="evidence at protein level"/>
<evidence type="ECO:0000250" key="1">
    <source>
        <dbReference type="UniProtKB" id="A2QAN3"/>
    </source>
</evidence>
<evidence type="ECO:0000255" key="2"/>
<evidence type="ECO:0000255" key="3">
    <source>
        <dbReference type="PROSITE-ProRule" id="PRU00498"/>
    </source>
</evidence>
<evidence type="ECO:0000269" key="4">
    <source>
    </source>
</evidence>
<evidence type="ECO:0000303" key="5">
    <source>
    </source>
</evidence>
<evidence type="ECO:0000305" key="6"/>
<evidence type="ECO:0000305" key="7">
    <source>
    </source>
</evidence>
<evidence type="ECO:0007744" key="8">
    <source>
        <dbReference type="PDB" id="4IUG"/>
    </source>
</evidence>
<evidence type="ECO:0007829" key="9">
    <source>
        <dbReference type="PDB" id="4IUG"/>
    </source>
</evidence>
<dbReference type="EC" id="3.2.1.23" evidence="4"/>
<dbReference type="EMBL" id="BA000052">
    <property type="protein sequence ID" value="BAE60622.1"/>
    <property type="molecule type" value="Genomic_DNA"/>
</dbReference>
<dbReference type="RefSeq" id="XP_001727461.1">
    <property type="nucleotide sequence ID" value="XM_001727409.1"/>
</dbReference>
<dbReference type="PDB" id="4IUG">
    <property type="method" value="X-ray"/>
    <property type="resolution" value="2.60 A"/>
    <property type="chains" value="A=1-1005"/>
</dbReference>
<dbReference type="PDBsum" id="4IUG"/>
<dbReference type="SMR" id="Q2UCU3"/>
<dbReference type="STRING" id="510516.Q2UCU3"/>
<dbReference type="Allergome" id="1261">
    <property type="allergen name" value="Asp o Lactase"/>
</dbReference>
<dbReference type="CAZy" id="GH35">
    <property type="family name" value="Glycoside Hydrolase Family 35"/>
</dbReference>
<dbReference type="GlyCosmos" id="Q2UCU3">
    <property type="glycosylation" value="11 sites, No reported glycans"/>
</dbReference>
<dbReference type="iPTMnet" id="Q2UCU3"/>
<dbReference type="EnsemblFungi" id="BAE60622">
    <property type="protein sequence ID" value="BAE60622"/>
    <property type="gene ID" value="AO090012000445"/>
</dbReference>
<dbReference type="GeneID" id="5987935"/>
<dbReference type="KEGG" id="aor:AO090012000445"/>
<dbReference type="VEuPathDB" id="FungiDB:AO090012000445"/>
<dbReference type="HOGENOM" id="CLU_005732_2_0_1"/>
<dbReference type="OMA" id="NEYSGAC"/>
<dbReference type="OrthoDB" id="20795at5052"/>
<dbReference type="BRENDA" id="3.2.1.23">
    <property type="organism ID" value="522"/>
</dbReference>
<dbReference type="SABIO-RK" id="Q2UCU3"/>
<dbReference type="EvolutionaryTrace" id="Q2UCU3"/>
<dbReference type="Proteomes" id="UP000006564">
    <property type="component" value="Chromosome 4"/>
</dbReference>
<dbReference type="GO" id="GO:0005615">
    <property type="term" value="C:extracellular space"/>
    <property type="evidence" value="ECO:0000314"/>
    <property type="project" value="UniProtKB"/>
</dbReference>
<dbReference type="GO" id="GO:0004565">
    <property type="term" value="F:beta-galactosidase activity"/>
    <property type="evidence" value="ECO:0000314"/>
    <property type="project" value="UniProtKB"/>
</dbReference>
<dbReference type="GO" id="GO:0005534">
    <property type="term" value="F:galactose binding"/>
    <property type="evidence" value="ECO:0000314"/>
    <property type="project" value="UniProtKB"/>
</dbReference>
<dbReference type="GO" id="GO:0005990">
    <property type="term" value="P:lactose catabolic process"/>
    <property type="evidence" value="ECO:0000314"/>
    <property type="project" value="UniProtKB"/>
</dbReference>
<dbReference type="GO" id="GO:0000272">
    <property type="term" value="P:polysaccharide catabolic process"/>
    <property type="evidence" value="ECO:0007669"/>
    <property type="project" value="UniProtKB-KW"/>
</dbReference>
<dbReference type="FunFam" id="2.102.20.10:FF:000001">
    <property type="entry name" value="Beta-galactosidase A"/>
    <property type="match status" value="1"/>
</dbReference>
<dbReference type="FunFam" id="2.60.120.260:FF:000065">
    <property type="entry name" value="Beta-galactosidase A"/>
    <property type="match status" value="1"/>
</dbReference>
<dbReference type="FunFam" id="2.60.120.260:FF:000088">
    <property type="entry name" value="Beta-galactosidase A"/>
    <property type="match status" value="1"/>
</dbReference>
<dbReference type="FunFam" id="2.60.390.10:FF:000001">
    <property type="entry name" value="Beta-galactosidase A"/>
    <property type="match status" value="1"/>
</dbReference>
<dbReference type="FunFam" id="3.20.20.80:FF:000040">
    <property type="entry name" value="Beta-galactosidase A"/>
    <property type="match status" value="1"/>
</dbReference>
<dbReference type="Gene3D" id="2.102.20.10">
    <property type="entry name" value="Beta-galactosidase, domain 2"/>
    <property type="match status" value="1"/>
</dbReference>
<dbReference type="Gene3D" id="2.60.390.10">
    <property type="entry name" value="Beta-galactosidase, domain 3"/>
    <property type="match status" value="1"/>
</dbReference>
<dbReference type="Gene3D" id="2.60.120.260">
    <property type="entry name" value="Galactose-binding domain-like"/>
    <property type="match status" value="2"/>
</dbReference>
<dbReference type="Gene3D" id="3.20.20.80">
    <property type="entry name" value="Glycosidases"/>
    <property type="match status" value="1"/>
</dbReference>
<dbReference type="InterPro" id="IPR018954">
    <property type="entry name" value="Betagal_dom2"/>
</dbReference>
<dbReference type="InterPro" id="IPR037110">
    <property type="entry name" value="Betagal_dom2_sf"/>
</dbReference>
<dbReference type="InterPro" id="IPR025972">
    <property type="entry name" value="BetaGal_dom3"/>
</dbReference>
<dbReference type="InterPro" id="IPR036833">
    <property type="entry name" value="BetaGal_dom3_sf"/>
</dbReference>
<dbReference type="InterPro" id="IPR025300">
    <property type="entry name" value="BetaGal_jelly_roll_dom"/>
</dbReference>
<dbReference type="InterPro" id="IPR008979">
    <property type="entry name" value="Galactose-bd-like_sf"/>
</dbReference>
<dbReference type="InterPro" id="IPR031330">
    <property type="entry name" value="Gly_Hdrlase_35_cat"/>
</dbReference>
<dbReference type="InterPro" id="IPR019801">
    <property type="entry name" value="Glyco_hydro_35_CS"/>
</dbReference>
<dbReference type="InterPro" id="IPR001944">
    <property type="entry name" value="Glycoside_Hdrlase_35"/>
</dbReference>
<dbReference type="InterPro" id="IPR017853">
    <property type="entry name" value="Glycoside_hydrolase_SF"/>
</dbReference>
<dbReference type="PANTHER" id="PTHR23421">
    <property type="entry name" value="BETA-GALACTOSIDASE RELATED"/>
    <property type="match status" value="1"/>
</dbReference>
<dbReference type="Pfam" id="PF13364">
    <property type="entry name" value="BetaGal_ABD2"/>
    <property type="match status" value="2"/>
</dbReference>
<dbReference type="Pfam" id="PF10435">
    <property type="entry name" value="BetaGal_dom2"/>
    <property type="match status" value="1"/>
</dbReference>
<dbReference type="Pfam" id="PF13363">
    <property type="entry name" value="BetaGal_dom3"/>
    <property type="match status" value="1"/>
</dbReference>
<dbReference type="Pfam" id="PF01301">
    <property type="entry name" value="Glyco_hydro_35"/>
    <property type="match status" value="1"/>
</dbReference>
<dbReference type="PRINTS" id="PR00742">
    <property type="entry name" value="GLHYDRLASE35"/>
</dbReference>
<dbReference type="SMART" id="SM01029">
    <property type="entry name" value="BetaGal_dom2"/>
    <property type="match status" value="1"/>
</dbReference>
<dbReference type="SUPFAM" id="SSF51445">
    <property type="entry name" value="(Trans)glycosidases"/>
    <property type="match status" value="1"/>
</dbReference>
<dbReference type="SUPFAM" id="SSF117100">
    <property type="entry name" value="Beta-galactosidase LacA, domain 3"/>
    <property type="match status" value="1"/>
</dbReference>
<dbReference type="SUPFAM" id="SSF49785">
    <property type="entry name" value="Galactose-binding domain-like"/>
    <property type="match status" value="2"/>
</dbReference>
<dbReference type="SUPFAM" id="SSF51011">
    <property type="entry name" value="Glycosyl hydrolase domain"/>
    <property type="match status" value="1"/>
</dbReference>
<dbReference type="PROSITE" id="PS01182">
    <property type="entry name" value="GLYCOSYL_HYDROL_F35"/>
    <property type="match status" value="1"/>
</dbReference>
<protein>
    <recommendedName>
        <fullName evidence="6">Beta-galactosidase A</fullName>
        <ecNumber evidence="4">3.2.1.23</ecNumber>
    </recommendedName>
    <alternativeName>
        <fullName evidence="5">Acidic beta-galactosidase</fullName>
        <shortName evidence="5">Ao-beta-gal</shortName>
    </alternativeName>
    <alternativeName>
        <fullName>Lactase A</fullName>
    </alternativeName>
</protein>